<accession>Q5BU09</accession>
<accession>Q9CZB5</accession>
<accession>Q9D914</accession>
<organism>
    <name type="scientific">Mus musculus</name>
    <name type="common">Mouse</name>
    <dbReference type="NCBI Taxonomy" id="10090"/>
    <lineage>
        <taxon>Eukaryota</taxon>
        <taxon>Metazoa</taxon>
        <taxon>Chordata</taxon>
        <taxon>Craniata</taxon>
        <taxon>Vertebrata</taxon>
        <taxon>Euteleostomi</taxon>
        <taxon>Mammalia</taxon>
        <taxon>Eutheria</taxon>
        <taxon>Euarchontoglires</taxon>
        <taxon>Glires</taxon>
        <taxon>Rodentia</taxon>
        <taxon>Myomorpha</taxon>
        <taxon>Muroidea</taxon>
        <taxon>Muridae</taxon>
        <taxon>Murinae</taxon>
        <taxon>Mus</taxon>
        <taxon>Mus</taxon>
    </lineage>
</organism>
<keyword id="KW-0007">Acetylation</keyword>
<keyword id="KW-0025">Alternative splicing</keyword>
<keyword id="KW-0963">Cytoplasm</keyword>
<keyword id="KW-0539">Nucleus</keyword>
<keyword id="KW-0597">Phosphoprotein</keyword>
<keyword id="KW-1185">Reference proteome</keyword>
<sequence>MNRLQDDYDPYAVEEPSDEEPALSSSEDELDVLLHGTPDQKRKLIRECLTGESESSSEDEFEKEMEAELNSTMKTMEDQLSSLGTGSSSGVAKVGGVTEKFYDEIYFDSDSEDEDKTVTKKKKKKQHRIPTNDELLYDPEKDNRDQAWVDAKRRGYHAFGLQRPRQKQQPVPNSDAVLNCPACMTTLCLDCQRHESYKTQYRAMFVMNCSINREEVLRYKNPENRRKRRSAKKMRSNPEDPAEREAEEIYHPVMCTECSTEVAVYDKDEVFHFFNVLASHS</sequence>
<proteinExistence type="evidence at protein level"/>
<dbReference type="EMBL" id="AY882557">
    <property type="protein sequence ID" value="AAX20161.1"/>
    <property type="molecule type" value="mRNA"/>
</dbReference>
<dbReference type="EMBL" id="AK007442">
    <property type="protein sequence ID" value="BAB25042.1"/>
    <property type="molecule type" value="mRNA"/>
</dbReference>
<dbReference type="EMBL" id="AK012800">
    <property type="protein sequence ID" value="BAB28479.1"/>
    <property type="molecule type" value="mRNA"/>
</dbReference>
<dbReference type="EMBL" id="BC037622">
    <property type="protein sequence ID" value="AAH37622.1"/>
    <property type="molecule type" value="mRNA"/>
</dbReference>
<dbReference type="CCDS" id="CCDS25910.1">
    <molecule id="Q5BU09-1"/>
</dbReference>
<dbReference type="CCDS" id="CCDS88337.1">
    <molecule id="Q5BU09-2"/>
</dbReference>
<dbReference type="RefSeq" id="NP_001318091.1">
    <molecule id="Q5BU09-2"/>
    <property type="nucleotide sequence ID" value="NM_001331162.1"/>
</dbReference>
<dbReference type="RefSeq" id="NP_079732.1">
    <molecule id="Q5BU09-1"/>
    <property type="nucleotide sequence ID" value="NM_025456.4"/>
</dbReference>
<dbReference type="RefSeq" id="XP_006516205.1">
    <molecule id="Q5BU09-1"/>
    <property type="nucleotide sequence ID" value="XM_006516142.5"/>
</dbReference>
<dbReference type="FunCoup" id="Q5BU09">
    <property type="interactions" value="3327"/>
</dbReference>
<dbReference type="STRING" id="10090.ENSMUSP00000123698"/>
<dbReference type="iPTMnet" id="Q5BU09"/>
<dbReference type="PhosphoSitePlus" id="Q5BU09"/>
<dbReference type="PaxDb" id="10090-ENSMUSP00000123698"/>
<dbReference type="ProteomicsDB" id="277710">
    <molecule id="Q5BU09-1"/>
</dbReference>
<dbReference type="ProteomicsDB" id="277711">
    <molecule id="Q5BU09-2"/>
</dbReference>
<dbReference type="Pumba" id="Q5BU09"/>
<dbReference type="Antibodypedia" id="128">
    <property type="antibodies" value="128 antibodies from 26 providers"/>
</dbReference>
<dbReference type="DNASU" id="66266"/>
<dbReference type="Ensembl" id="ENSMUST00000110713.10">
    <molecule id="Q5BU09-2"/>
    <property type="protein sequence ID" value="ENSMUSP00000106341.4"/>
    <property type="gene ID" value="ENSMUSG00000054302.17"/>
</dbReference>
<dbReference type="Ensembl" id="ENSMUST00000161592.8">
    <molecule id="Q5BU09-1"/>
    <property type="protein sequence ID" value="ENSMUSP00000123698.2"/>
    <property type="gene ID" value="ENSMUSG00000054302.17"/>
</dbReference>
<dbReference type="GeneID" id="66266"/>
<dbReference type="KEGG" id="mmu:66266"/>
<dbReference type="UCSC" id="uc007nnu.1">
    <molecule id="Q5BU09-1"/>
    <property type="organism name" value="mouse"/>
</dbReference>
<dbReference type="UCSC" id="uc011ylx.1">
    <molecule id="Q5BU09-2"/>
    <property type="organism name" value="mouse"/>
</dbReference>
<dbReference type="AGR" id="MGI:1913516"/>
<dbReference type="CTD" id="55837"/>
<dbReference type="MGI" id="MGI:1913516">
    <property type="gene designation" value="Eapp"/>
</dbReference>
<dbReference type="VEuPathDB" id="HostDB:ENSMUSG00000054302"/>
<dbReference type="eggNOG" id="KOG3395">
    <property type="taxonomic scope" value="Eukaryota"/>
</dbReference>
<dbReference type="GeneTree" id="ENSGT00390000001332"/>
<dbReference type="HOGENOM" id="CLU_075202_0_0_1"/>
<dbReference type="InParanoid" id="Q5BU09"/>
<dbReference type="OMA" id="CFVNKEE"/>
<dbReference type="OrthoDB" id="122464at2759"/>
<dbReference type="PhylomeDB" id="Q5BU09"/>
<dbReference type="TreeFam" id="TF328497"/>
<dbReference type="BioGRID-ORCS" id="66266">
    <property type="hits" value="18 hits in 75 CRISPR screens"/>
</dbReference>
<dbReference type="ChiTaRS" id="Eapp">
    <property type="organism name" value="mouse"/>
</dbReference>
<dbReference type="PRO" id="PR:Q5BU09"/>
<dbReference type="Proteomes" id="UP000000589">
    <property type="component" value="Chromosome 12"/>
</dbReference>
<dbReference type="RNAct" id="Q5BU09">
    <property type="molecule type" value="protein"/>
</dbReference>
<dbReference type="Bgee" id="ENSMUSG00000054302">
    <property type="expression patterns" value="Expressed in interventricular septum and 257 other cell types or tissues"/>
</dbReference>
<dbReference type="ExpressionAtlas" id="Q5BU09">
    <property type="expression patterns" value="baseline and differential"/>
</dbReference>
<dbReference type="GO" id="GO:0005737">
    <property type="term" value="C:cytoplasm"/>
    <property type="evidence" value="ECO:0007669"/>
    <property type="project" value="UniProtKB-SubCell"/>
</dbReference>
<dbReference type="GO" id="GO:0016607">
    <property type="term" value="C:nuclear speck"/>
    <property type="evidence" value="ECO:0007669"/>
    <property type="project" value="Ensembl"/>
</dbReference>
<dbReference type="GO" id="GO:0005634">
    <property type="term" value="C:nucleus"/>
    <property type="evidence" value="ECO:0000266"/>
    <property type="project" value="MGI"/>
</dbReference>
<dbReference type="GO" id="GO:0034244">
    <property type="term" value="P:negative regulation of transcription elongation by RNA polymerase II"/>
    <property type="evidence" value="ECO:0000266"/>
    <property type="project" value="MGI"/>
</dbReference>
<dbReference type="GO" id="GO:0008284">
    <property type="term" value="P:positive regulation of cell population proliferation"/>
    <property type="evidence" value="ECO:0000266"/>
    <property type="project" value="MGI"/>
</dbReference>
<dbReference type="GO" id="GO:0032968">
    <property type="term" value="P:positive regulation of transcription elongation by RNA polymerase II"/>
    <property type="evidence" value="ECO:0000266"/>
    <property type="project" value="MGI"/>
</dbReference>
<dbReference type="InterPro" id="IPR019370">
    <property type="entry name" value="E2F-assoc_phosphoprotein"/>
</dbReference>
<dbReference type="PANTHER" id="PTHR15967">
    <property type="entry name" value="E2F-ASSOCIATED PHOSPHOPROTEIN"/>
    <property type="match status" value="1"/>
</dbReference>
<dbReference type="PANTHER" id="PTHR15967:SF0">
    <property type="entry name" value="E2F-ASSOCIATED PHOSPHOPROTEIN"/>
    <property type="match status" value="1"/>
</dbReference>
<dbReference type="Pfam" id="PF10238">
    <property type="entry name" value="Eapp_C"/>
    <property type="match status" value="1"/>
</dbReference>
<feature type="chain" id="PRO_0000086905" description="E2F-associated phosphoprotein">
    <location>
        <begin position="1"/>
        <end position="281"/>
    </location>
</feature>
<feature type="region of interest" description="Disordered" evidence="3">
    <location>
        <begin position="1"/>
        <end position="27"/>
    </location>
</feature>
<feature type="region of interest" description="Disordered" evidence="3">
    <location>
        <begin position="222"/>
        <end position="245"/>
    </location>
</feature>
<feature type="compositionally biased region" description="Acidic residues" evidence="3">
    <location>
        <begin position="15"/>
        <end position="27"/>
    </location>
</feature>
<feature type="compositionally biased region" description="Basic residues" evidence="3">
    <location>
        <begin position="225"/>
        <end position="235"/>
    </location>
</feature>
<feature type="compositionally biased region" description="Basic and acidic residues" evidence="3">
    <location>
        <begin position="236"/>
        <end position="245"/>
    </location>
</feature>
<feature type="modified residue" description="N-acetylmethionine" evidence="2">
    <location>
        <position position="1"/>
    </location>
</feature>
<feature type="modified residue" description="Phosphoserine" evidence="2">
    <location>
        <position position="17"/>
    </location>
</feature>
<feature type="modified residue" description="Phosphothreonine" evidence="2">
    <location>
        <position position="37"/>
    </location>
</feature>
<feature type="modified residue" description="Phosphoserine" evidence="7">
    <location>
        <position position="109"/>
    </location>
</feature>
<feature type="modified residue" description="Phosphoserine" evidence="7">
    <location>
        <position position="111"/>
    </location>
</feature>
<feature type="splice variant" id="VSP_015331" description="In isoform 2." evidence="5">
    <location>
        <begin position="156"/>
        <end position="193"/>
    </location>
</feature>
<feature type="sequence conflict" description="In Ref. 1; AAX20161." evidence="6" ref="1">
    <original>K</original>
    <variation>R</variation>
    <location>
        <position position="116"/>
    </location>
</feature>
<reference key="1">
    <citation type="journal article" date="2005" name="Mol. Biol. Cell">
        <title>EAPP, a novel E2F binding protein that modulates E2F-dependent transcription.</title>
        <authorList>
            <person name="Novy M."/>
            <person name="Pohn R."/>
            <person name="Andorfer P."/>
            <person name="Novy-Weiland T."/>
            <person name="Galos B."/>
            <person name="Schwarzmayr L."/>
            <person name="Rotheneder H."/>
        </authorList>
    </citation>
    <scope>NUCLEOTIDE SEQUENCE [MRNA] (ISOFORM 1)</scope>
    <scope>INTERACTION WITH E2F1; E2F2 AND E2F3</scope>
</reference>
<reference key="2">
    <citation type="journal article" date="2005" name="Science">
        <title>The transcriptional landscape of the mammalian genome.</title>
        <authorList>
            <person name="Carninci P."/>
            <person name="Kasukawa T."/>
            <person name="Katayama S."/>
            <person name="Gough J."/>
            <person name="Frith M.C."/>
            <person name="Maeda N."/>
            <person name="Oyama R."/>
            <person name="Ravasi T."/>
            <person name="Lenhard B."/>
            <person name="Wells C."/>
            <person name="Kodzius R."/>
            <person name="Shimokawa K."/>
            <person name="Bajic V.B."/>
            <person name="Brenner S.E."/>
            <person name="Batalov S."/>
            <person name="Forrest A.R."/>
            <person name="Zavolan M."/>
            <person name="Davis M.J."/>
            <person name="Wilming L.G."/>
            <person name="Aidinis V."/>
            <person name="Allen J.E."/>
            <person name="Ambesi-Impiombato A."/>
            <person name="Apweiler R."/>
            <person name="Aturaliya R.N."/>
            <person name="Bailey T.L."/>
            <person name="Bansal M."/>
            <person name="Baxter L."/>
            <person name="Beisel K.W."/>
            <person name="Bersano T."/>
            <person name="Bono H."/>
            <person name="Chalk A.M."/>
            <person name="Chiu K.P."/>
            <person name="Choudhary V."/>
            <person name="Christoffels A."/>
            <person name="Clutterbuck D.R."/>
            <person name="Crowe M.L."/>
            <person name="Dalla E."/>
            <person name="Dalrymple B.P."/>
            <person name="de Bono B."/>
            <person name="Della Gatta G."/>
            <person name="di Bernardo D."/>
            <person name="Down T."/>
            <person name="Engstrom P."/>
            <person name="Fagiolini M."/>
            <person name="Faulkner G."/>
            <person name="Fletcher C.F."/>
            <person name="Fukushima T."/>
            <person name="Furuno M."/>
            <person name="Futaki S."/>
            <person name="Gariboldi M."/>
            <person name="Georgii-Hemming P."/>
            <person name="Gingeras T.R."/>
            <person name="Gojobori T."/>
            <person name="Green R.E."/>
            <person name="Gustincich S."/>
            <person name="Harbers M."/>
            <person name="Hayashi Y."/>
            <person name="Hensch T.K."/>
            <person name="Hirokawa N."/>
            <person name="Hill D."/>
            <person name="Huminiecki L."/>
            <person name="Iacono M."/>
            <person name="Ikeo K."/>
            <person name="Iwama A."/>
            <person name="Ishikawa T."/>
            <person name="Jakt M."/>
            <person name="Kanapin A."/>
            <person name="Katoh M."/>
            <person name="Kawasawa Y."/>
            <person name="Kelso J."/>
            <person name="Kitamura H."/>
            <person name="Kitano H."/>
            <person name="Kollias G."/>
            <person name="Krishnan S.P."/>
            <person name="Kruger A."/>
            <person name="Kummerfeld S.K."/>
            <person name="Kurochkin I.V."/>
            <person name="Lareau L.F."/>
            <person name="Lazarevic D."/>
            <person name="Lipovich L."/>
            <person name="Liu J."/>
            <person name="Liuni S."/>
            <person name="McWilliam S."/>
            <person name="Madan Babu M."/>
            <person name="Madera M."/>
            <person name="Marchionni L."/>
            <person name="Matsuda H."/>
            <person name="Matsuzawa S."/>
            <person name="Miki H."/>
            <person name="Mignone F."/>
            <person name="Miyake S."/>
            <person name="Morris K."/>
            <person name="Mottagui-Tabar S."/>
            <person name="Mulder N."/>
            <person name="Nakano N."/>
            <person name="Nakauchi H."/>
            <person name="Ng P."/>
            <person name="Nilsson R."/>
            <person name="Nishiguchi S."/>
            <person name="Nishikawa S."/>
            <person name="Nori F."/>
            <person name="Ohara O."/>
            <person name="Okazaki Y."/>
            <person name="Orlando V."/>
            <person name="Pang K.C."/>
            <person name="Pavan W.J."/>
            <person name="Pavesi G."/>
            <person name="Pesole G."/>
            <person name="Petrovsky N."/>
            <person name="Piazza S."/>
            <person name="Reed J."/>
            <person name="Reid J.F."/>
            <person name="Ring B.Z."/>
            <person name="Ringwald M."/>
            <person name="Rost B."/>
            <person name="Ruan Y."/>
            <person name="Salzberg S.L."/>
            <person name="Sandelin A."/>
            <person name="Schneider C."/>
            <person name="Schoenbach C."/>
            <person name="Sekiguchi K."/>
            <person name="Semple C.A."/>
            <person name="Seno S."/>
            <person name="Sessa L."/>
            <person name="Sheng Y."/>
            <person name="Shibata Y."/>
            <person name="Shimada H."/>
            <person name="Shimada K."/>
            <person name="Silva D."/>
            <person name="Sinclair B."/>
            <person name="Sperling S."/>
            <person name="Stupka E."/>
            <person name="Sugiura K."/>
            <person name="Sultana R."/>
            <person name="Takenaka Y."/>
            <person name="Taki K."/>
            <person name="Tammoja K."/>
            <person name="Tan S.L."/>
            <person name="Tang S."/>
            <person name="Taylor M.S."/>
            <person name="Tegner J."/>
            <person name="Teichmann S.A."/>
            <person name="Ueda H.R."/>
            <person name="van Nimwegen E."/>
            <person name="Verardo R."/>
            <person name="Wei C.L."/>
            <person name="Yagi K."/>
            <person name="Yamanishi H."/>
            <person name="Zabarovsky E."/>
            <person name="Zhu S."/>
            <person name="Zimmer A."/>
            <person name="Hide W."/>
            <person name="Bult C."/>
            <person name="Grimmond S.M."/>
            <person name="Teasdale R.D."/>
            <person name="Liu E.T."/>
            <person name="Brusic V."/>
            <person name="Quackenbush J."/>
            <person name="Wahlestedt C."/>
            <person name="Mattick J.S."/>
            <person name="Hume D.A."/>
            <person name="Kai C."/>
            <person name="Sasaki D."/>
            <person name="Tomaru Y."/>
            <person name="Fukuda S."/>
            <person name="Kanamori-Katayama M."/>
            <person name="Suzuki M."/>
            <person name="Aoki J."/>
            <person name="Arakawa T."/>
            <person name="Iida J."/>
            <person name="Imamura K."/>
            <person name="Itoh M."/>
            <person name="Kato T."/>
            <person name="Kawaji H."/>
            <person name="Kawagashira N."/>
            <person name="Kawashima T."/>
            <person name="Kojima M."/>
            <person name="Kondo S."/>
            <person name="Konno H."/>
            <person name="Nakano K."/>
            <person name="Ninomiya N."/>
            <person name="Nishio T."/>
            <person name="Okada M."/>
            <person name="Plessy C."/>
            <person name="Shibata K."/>
            <person name="Shiraki T."/>
            <person name="Suzuki S."/>
            <person name="Tagami M."/>
            <person name="Waki K."/>
            <person name="Watahiki A."/>
            <person name="Okamura-Oho Y."/>
            <person name="Suzuki H."/>
            <person name="Kawai J."/>
            <person name="Hayashizaki Y."/>
        </authorList>
    </citation>
    <scope>NUCLEOTIDE SEQUENCE [LARGE SCALE MRNA] (ISOFORMS 1 AND 2)</scope>
    <source>
        <strain>C57BL/6J</strain>
        <tissue>Pancreas</tissue>
    </source>
</reference>
<reference key="3">
    <citation type="journal article" date="2004" name="Genome Res.">
        <title>The status, quality, and expansion of the NIH full-length cDNA project: the Mammalian Gene Collection (MGC).</title>
        <authorList>
            <consortium name="The MGC Project Team"/>
        </authorList>
    </citation>
    <scope>NUCLEOTIDE SEQUENCE [LARGE SCALE MRNA] (ISOFORM 1)</scope>
    <source>
        <strain>FVB/N-3</strain>
        <tissue>Mammary tumor</tissue>
    </source>
</reference>
<reference key="4">
    <citation type="journal article" date="2010" name="Cell">
        <title>A tissue-specific atlas of mouse protein phosphorylation and expression.</title>
        <authorList>
            <person name="Huttlin E.L."/>
            <person name="Jedrychowski M.P."/>
            <person name="Elias J.E."/>
            <person name="Goswami T."/>
            <person name="Rad R."/>
            <person name="Beausoleil S.A."/>
            <person name="Villen J."/>
            <person name="Haas W."/>
            <person name="Sowa M.E."/>
            <person name="Gygi S.P."/>
        </authorList>
    </citation>
    <scope>PHOSPHORYLATION [LARGE SCALE ANALYSIS] AT SER-109 AND SER-111</scope>
    <scope>IDENTIFICATION BY MASS SPECTROMETRY [LARGE SCALE ANALYSIS]</scope>
    <source>
        <tissue>Brain</tissue>
        <tissue>Brown adipose tissue</tissue>
        <tissue>Kidney</tissue>
        <tissue>Liver</tissue>
        <tissue>Lung</tissue>
        <tissue>Pancreas</tissue>
        <tissue>Spleen</tissue>
        <tissue>Testis</tissue>
    </source>
</reference>
<gene>
    <name type="primary">Eapp</name>
</gene>
<protein>
    <recommendedName>
        <fullName>E2F-associated phosphoprotein</fullName>
        <shortName>EAPP</shortName>
    </recommendedName>
</protein>
<comment type="function">
    <text evidence="1">May play an important role in the fine-tuning of both major E2F1 activities, the regulation of the cell-cycle and the induction of apoptosis. Promotes S-phase entry, and inhibits p14(ARP) expression (By similarity).</text>
</comment>
<comment type="subunit">
    <text evidence="4">Interacts with E2F1. The C-terminal half binds the N-terminal of E2F1. Also interacts with E2F2 and E2F3, but not E2F4.</text>
</comment>
<comment type="subcellular location">
    <subcellularLocation>
        <location evidence="1">Cytoplasm</location>
    </subcellularLocation>
    <subcellularLocation>
        <location evidence="1">Nucleus</location>
    </subcellularLocation>
</comment>
<comment type="alternative products">
    <event type="alternative splicing"/>
    <isoform>
        <id>Q5BU09-1</id>
        <name>1</name>
        <sequence type="displayed"/>
    </isoform>
    <isoform>
        <id>Q5BU09-2</id>
        <name>2</name>
        <sequence type="described" ref="VSP_015331"/>
    </isoform>
</comment>
<name>EAPP_MOUSE</name>
<evidence type="ECO:0000250" key="1"/>
<evidence type="ECO:0000250" key="2">
    <source>
        <dbReference type="UniProtKB" id="Q56P03"/>
    </source>
</evidence>
<evidence type="ECO:0000256" key="3">
    <source>
        <dbReference type="SAM" id="MobiDB-lite"/>
    </source>
</evidence>
<evidence type="ECO:0000269" key="4">
    <source>
    </source>
</evidence>
<evidence type="ECO:0000303" key="5">
    <source>
    </source>
</evidence>
<evidence type="ECO:0000305" key="6"/>
<evidence type="ECO:0007744" key="7">
    <source>
    </source>
</evidence>